<gene>
    <name type="primary">ARPN</name>
    <name type="ordered locus">At2g02850</name>
    <name type="ORF">T17M13.2</name>
</gene>
<feature type="signal peptide" evidence="1">
    <location>
        <begin position="1"/>
        <end position="33"/>
    </location>
</feature>
<feature type="chain" id="PRO_0000002864" description="Basic blue protein">
    <location>
        <begin position="34"/>
        <end position="129"/>
    </location>
</feature>
<feature type="domain" description="Phytocyanin" evidence="2">
    <location>
        <begin position="34"/>
        <end position="129"/>
    </location>
</feature>
<feature type="binding site" evidence="2">
    <location>
        <position position="72"/>
    </location>
    <ligand>
        <name>Cu cation</name>
        <dbReference type="ChEBI" id="CHEBI:23378"/>
    </ligand>
</feature>
<feature type="binding site" evidence="2">
    <location>
        <position position="112"/>
    </location>
    <ligand>
        <name>Cu cation</name>
        <dbReference type="ChEBI" id="CHEBI:23378"/>
    </ligand>
</feature>
<feature type="binding site" evidence="2">
    <location>
        <position position="117"/>
    </location>
    <ligand>
        <name>Cu cation</name>
        <dbReference type="ChEBI" id="CHEBI:23378"/>
    </ligand>
</feature>
<feature type="binding site" evidence="2">
    <location>
        <position position="122"/>
    </location>
    <ligand>
        <name>Cu cation</name>
        <dbReference type="ChEBI" id="CHEBI:23378"/>
    </ligand>
</feature>
<feature type="disulfide bond" evidence="2">
    <location>
        <begin position="85"/>
        <end position="118"/>
    </location>
</feature>
<protein>
    <recommendedName>
        <fullName>Basic blue protein</fullName>
    </recommendedName>
    <alternativeName>
        <fullName>Plantacyanin</fullName>
    </alternativeName>
</protein>
<name>BABL_ARATH</name>
<evidence type="ECO:0000255" key="1"/>
<evidence type="ECO:0000255" key="2">
    <source>
        <dbReference type="PROSITE-ProRule" id="PRU00818"/>
    </source>
</evidence>
<evidence type="ECO:0000269" key="3">
    <source>
    </source>
</evidence>
<evidence type="ECO:0000269" key="4">
    <source>
    </source>
</evidence>
<evidence type="ECO:0000269" key="5">
    <source>
    </source>
</evidence>
<organism>
    <name type="scientific">Arabidopsis thaliana</name>
    <name type="common">Mouse-ear cress</name>
    <dbReference type="NCBI Taxonomy" id="3702"/>
    <lineage>
        <taxon>Eukaryota</taxon>
        <taxon>Viridiplantae</taxon>
        <taxon>Streptophyta</taxon>
        <taxon>Embryophyta</taxon>
        <taxon>Tracheophyta</taxon>
        <taxon>Spermatophyta</taxon>
        <taxon>Magnoliopsida</taxon>
        <taxon>eudicotyledons</taxon>
        <taxon>Gunneridae</taxon>
        <taxon>Pentapetalae</taxon>
        <taxon>rosids</taxon>
        <taxon>malvids</taxon>
        <taxon>Brassicales</taxon>
        <taxon>Brassicaceae</taxon>
        <taxon>Camelineae</taxon>
        <taxon>Arabidopsis</taxon>
    </lineage>
</organism>
<keyword id="KW-0186">Copper</keyword>
<keyword id="KW-1015">Disulfide bond</keyword>
<keyword id="KW-0249">Electron transport</keyword>
<keyword id="KW-0272">Extracellular matrix</keyword>
<keyword id="KW-0479">Metal-binding</keyword>
<keyword id="KW-1185">Reference proteome</keyword>
<keyword id="KW-0964">Secreted</keyword>
<keyword id="KW-0732">Signal</keyword>
<keyword id="KW-0813">Transport</keyword>
<proteinExistence type="evidence at transcript level"/>
<sequence>MAKGRGSASWSARAIVTLMAVSVLLLQADYVQAATYTVGDSGIWTFNAVGWPKGKHFRAGDVLVFNYNPRMHNVVKVDSGSYNNCKTPTGAKPYTSGKDRITLSKGQNFFICNFPNHCESDMKIAVTAV</sequence>
<comment type="function">
    <text evidence="3">Forms a concentration gradient along the pollen tube growth path, with a lower level in the stigma papilla cell wall and a higher level in the transmitting tract extracellular matix of the style.</text>
</comment>
<comment type="subcellular location">
    <subcellularLocation>
        <location evidence="3">Secreted</location>
        <location evidence="3">Extracellular space</location>
        <location evidence="3">Extracellular matrix</location>
    </subcellularLocation>
</comment>
<comment type="tissue specificity">
    <text evidence="3">Expressed in the inflorescence and in the transmitting tract of the pistil. Detected in roots, stems, cauline leaves, cotyledons, hypocotyls, guard cells, pistils, sepals, stamen filaments and vascular bundles of roots but not of leaves. Not expressed in petals, anthers or pollen.</text>
</comment>
<comment type="developmental stage">
    <text evidence="3">Expressed in style and papilla cells when pollination occurs. Detected in the mature embryo sacs of ovules before and after fertilization.</text>
</comment>
<comment type="induction">
    <text evidence="4 5">Down-regulated by microRNA 408 (miR408) via AGO1 and AGO2 in response to low copper availability.</text>
</comment>
<comment type="disruption phenotype">
    <text evidence="3">No visible phenotype.</text>
</comment>
<dbReference type="EMBL" id="U76297">
    <property type="protein sequence ID" value="AAC32449.1"/>
    <property type="molecule type" value="Genomic_DNA"/>
</dbReference>
<dbReference type="EMBL" id="AC002521">
    <property type="protein sequence ID" value="AAM14843.1"/>
    <property type="molecule type" value="Genomic_DNA"/>
</dbReference>
<dbReference type="EMBL" id="AC004138">
    <property type="protein sequence ID" value="AAC32906.1"/>
    <property type="molecule type" value="Genomic_DNA"/>
</dbReference>
<dbReference type="EMBL" id="CP002685">
    <property type="protein sequence ID" value="AEC05633.1"/>
    <property type="molecule type" value="Genomic_DNA"/>
</dbReference>
<dbReference type="EMBL" id="AF325063">
    <property type="protein sequence ID" value="AAK17131.1"/>
    <property type="molecule type" value="mRNA"/>
</dbReference>
<dbReference type="EMBL" id="AY064141">
    <property type="protein sequence ID" value="AAL36048.1"/>
    <property type="molecule type" value="mRNA"/>
</dbReference>
<dbReference type="EMBL" id="AY097407">
    <property type="protein sequence ID" value="AAM19923.1"/>
    <property type="molecule type" value="mRNA"/>
</dbReference>
<dbReference type="EMBL" id="AY084407">
    <property type="protein sequence ID" value="AAM60981.1"/>
    <property type="molecule type" value="mRNA"/>
</dbReference>
<dbReference type="PIR" id="F84441">
    <property type="entry name" value="F84441"/>
</dbReference>
<dbReference type="PIR" id="T00843">
    <property type="entry name" value="T00843"/>
</dbReference>
<dbReference type="RefSeq" id="NP_178388.1">
    <property type="nucleotide sequence ID" value="NM_126340.3"/>
</dbReference>
<dbReference type="SMR" id="Q8LG89"/>
<dbReference type="FunCoup" id="Q8LG89">
    <property type="interactions" value="152"/>
</dbReference>
<dbReference type="STRING" id="3702.Q8LG89"/>
<dbReference type="PaxDb" id="3702-AT2G02850.1"/>
<dbReference type="ProteomicsDB" id="241119"/>
<dbReference type="EnsemblPlants" id="AT2G02850.1">
    <property type="protein sequence ID" value="AT2G02850.1"/>
    <property type="gene ID" value="AT2G02850"/>
</dbReference>
<dbReference type="GeneID" id="814816"/>
<dbReference type="Gramene" id="AT2G02850.1">
    <property type="protein sequence ID" value="AT2G02850.1"/>
    <property type="gene ID" value="AT2G02850"/>
</dbReference>
<dbReference type="KEGG" id="ath:AT2G02850"/>
<dbReference type="Araport" id="AT2G02850"/>
<dbReference type="TAIR" id="AT2G02850">
    <property type="gene designation" value="ARPN"/>
</dbReference>
<dbReference type="eggNOG" id="ENOG502S11U">
    <property type="taxonomic scope" value="Eukaryota"/>
</dbReference>
<dbReference type="HOGENOM" id="CLU_058719_4_1_1"/>
<dbReference type="InParanoid" id="Q8LG89"/>
<dbReference type="OMA" id="TFNAVGW"/>
<dbReference type="OrthoDB" id="2011645at2759"/>
<dbReference type="PhylomeDB" id="Q8LG89"/>
<dbReference type="PRO" id="PR:Q8LG89"/>
<dbReference type="Proteomes" id="UP000006548">
    <property type="component" value="Chromosome 2"/>
</dbReference>
<dbReference type="ExpressionAtlas" id="Q8LG89">
    <property type="expression patterns" value="baseline and differential"/>
</dbReference>
<dbReference type="GO" id="GO:0048046">
    <property type="term" value="C:apoplast"/>
    <property type="evidence" value="ECO:0007005"/>
    <property type="project" value="TAIR"/>
</dbReference>
<dbReference type="GO" id="GO:0031012">
    <property type="term" value="C:extracellular matrix"/>
    <property type="evidence" value="ECO:0000314"/>
    <property type="project" value="TAIR"/>
</dbReference>
<dbReference type="GO" id="GO:0099503">
    <property type="term" value="C:secretory vesicle"/>
    <property type="evidence" value="ECO:0007005"/>
    <property type="project" value="TAIR"/>
</dbReference>
<dbReference type="GO" id="GO:0009055">
    <property type="term" value="F:electron transfer activity"/>
    <property type="evidence" value="ECO:0007669"/>
    <property type="project" value="InterPro"/>
</dbReference>
<dbReference type="GO" id="GO:0046872">
    <property type="term" value="F:metal ion binding"/>
    <property type="evidence" value="ECO:0007669"/>
    <property type="project" value="UniProtKB-KW"/>
</dbReference>
<dbReference type="GO" id="GO:0048653">
    <property type="term" value="P:anther development"/>
    <property type="evidence" value="ECO:0000315"/>
    <property type="project" value="TAIR"/>
</dbReference>
<dbReference type="GO" id="GO:0009856">
    <property type="term" value="P:pollination"/>
    <property type="evidence" value="ECO:0000315"/>
    <property type="project" value="TAIR"/>
</dbReference>
<dbReference type="CDD" id="cd11013">
    <property type="entry name" value="Plantacyanin"/>
    <property type="match status" value="1"/>
</dbReference>
<dbReference type="FunFam" id="2.60.40.420:FF:000013">
    <property type="entry name" value="basic blue protein-like"/>
    <property type="match status" value="1"/>
</dbReference>
<dbReference type="Gene3D" id="2.60.40.420">
    <property type="entry name" value="Cupredoxins - blue copper proteins"/>
    <property type="match status" value="1"/>
</dbReference>
<dbReference type="InterPro" id="IPR008972">
    <property type="entry name" value="Cupredoxin"/>
</dbReference>
<dbReference type="InterPro" id="IPR039391">
    <property type="entry name" value="Phytocyanin-like"/>
</dbReference>
<dbReference type="InterPro" id="IPR003245">
    <property type="entry name" value="Phytocyanin_dom"/>
</dbReference>
<dbReference type="InterPro" id="IPR041844">
    <property type="entry name" value="Plantacyanin"/>
</dbReference>
<dbReference type="PANTHER" id="PTHR33021:SF424">
    <property type="entry name" value="BASIC BLUE PROTEIN"/>
    <property type="match status" value="1"/>
</dbReference>
<dbReference type="PANTHER" id="PTHR33021">
    <property type="entry name" value="BLUE COPPER PROTEIN"/>
    <property type="match status" value="1"/>
</dbReference>
<dbReference type="Pfam" id="PF02298">
    <property type="entry name" value="Cu_bind_like"/>
    <property type="match status" value="1"/>
</dbReference>
<dbReference type="SUPFAM" id="SSF49503">
    <property type="entry name" value="Cupredoxins"/>
    <property type="match status" value="1"/>
</dbReference>
<dbReference type="PROSITE" id="PS51485">
    <property type="entry name" value="PHYTOCYANIN"/>
    <property type="match status" value="1"/>
</dbReference>
<accession>Q8LG89</accession>
<accession>O64499</accession>
<accession>Q8S8T5</accession>
<reference key="1">
    <citation type="journal article" date="1998" name="Protein Sci.">
        <title>Uclacyanins, stellacyanins, and plantacyanins are distinct subfamilies of phytocyanins: plant-specific mononuclear blue copper proteins.</title>
        <authorList>
            <person name="Nersissian A.M."/>
            <person name="Immoos C."/>
            <person name="Hill M.G."/>
            <person name="Hart P.J."/>
            <person name="Williams G."/>
            <person name="Herrmann R.G."/>
            <person name="Valentine J.S."/>
        </authorList>
    </citation>
    <scope>NUCLEOTIDE SEQUENCE [GENOMIC DNA]</scope>
</reference>
<reference key="2">
    <citation type="journal article" date="1999" name="Nature">
        <title>Sequence and analysis of chromosome 2 of the plant Arabidopsis thaliana.</title>
        <authorList>
            <person name="Lin X."/>
            <person name="Kaul S."/>
            <person name="Rounsley S.D."/>
            <person name="Shea T.P."/>
            <person name="Benito M.-I."/>
            <person name="Town C.D."/>
            <person name="Fujii C.Y."/>
            <person name="Mason T.M."/>
            <person name="Bowman C.L."/>
            <person name="Barnstead M.E."/>
            <person name="Feldblyum T.V."/>
            <person name="Buell C.R."/>
            <person name="Ketchum K.A."/>
            <person name="Lee J.J."/>
            <person name="Ronning C.M."/>
            <person name="Koo H.L."/>
            <person name="Moffat K.S."/>
            <person name="Cronin L.A."/>
            <person name="Shen M."/>
            <person name="Pai G."/>
            <person name="Van Aken S."/>
            <person name="Umayam L."/>
            <person name="Tallon L.J."/>
            <person name="Gill J.E."/>
            <person name="Adams M.D."/>
            <person name="Carrera A.J."/>
            <person name="Creasy T.H."/>
            <person name="Goodman H.M."/>
            <person name="Somerville C.R."/>
            <person name="Copenhaver G.P."/>
            <person name="Preuss D."/>
            <person name="Nierman W.C."/>
            <person name="White O."/>
            <person name="Eisen J.A."/>
            <person name="Salzberg S.L."/>
            <person name="Fraser C.M."/>
            <person name="Venter J.C."/>
        </authorList>
    </citation>
    <scope>NUCLEOTIDE SEQUENCE [LARGE SCALE GENOMIC DNA]</scope>
    <source>
        <strain>cv. Columbia</strain>
    </source>
</reference>
<reference key="3">
    <citation type="journal article" date="2017" name="Plant J.">
        <title>Araport11: a complete reannotation of the Arabidopsis thaliana reference genome.</title>
        <authorList>
            <person name="Cheng C.Y."/>
            <person name="Krishnakumar V."/>
            <person name="Chan A.P."/>
            <person name="Thibaud-Nissen F."/>
            <person name="Schobel S."/>
            <person name="Town C.D."/>
        </authorList>
    </citation>
    <scope>GENOME REANNOTATION</scope>
    <source>
        <strain>cv. Columbia</strain>
    </source>
</reference>
<reference key="4">
    <citation type="journal article" date="2003" name="Science">
        <title>Empirical analysis of transcriptional activity in the Arabidopsis genome.</title>
        <authorList>
            <person name="Yamada K."/>
            <person name="Lim J."/>
            <person name="Dale J.M."/>
            <person name="Chen H."/>
            <person name="Shinn P."/>
            <person name="Palm C.J."/>
            <person name="Southwick A.M."/>
            <person name="Wu H.C."/>
            <person name="Kim C.J."/>
            <person name="Nguyen M."/>
            <person name="Pham P.K."/>
            <person name="Cheuk R.F."/>
            <person name="Karlin-Newmann G."/>
            <person name="Liu S.X."/>
            <person name="Lam B."/>
            <person name="Sakano H."/>
            <person name="Wu T."/>
            <person name="Yu G."/>
            <person name="Miranda M."/>
            <person name="Quach H.L."/>
            <person name="Tripp M."/>
            <person name="Chang C.H."/>
            <person name="Lee J.M."/>
            <person name="Toriumi M.J."/>
            <person name="Chan M.M."/>
            <person name="Tang C.C."/>
            <person name="Onodera C.S."/>
            <person name="Deng J.M."/>
            <person name="Akiyama K."/>
            <person name="Ansari Y."/>
            <person name="Arakawa T."/>
            <person name="Banh J."/>
            <person name="Banno F."/>
            <person name="Bowser L."/>
            <person name="Brooks S.Y."/>
            <person name="Carninci P."/>
            <person name="Chao Q."/>
            <person name="Choy N."/>
            <person name="Enju A."/>
            <person name="Goldsmith A.D."/>
            <person name="Gurjal M."/>
            <person name="Hansen N.F."/>
            <person name="Hayashizaki Y."/>
            <person name="Johnson-Hopson C."/>
            <person name="Hsuan V.W."/>
            <person name="Iida K."/>
            <person name="Karnes M."/>
            <person name="Khan S."/>
            <person name="Koesema E."/>
            <person name="Ishida J."/>
            <person name="Jiang P.X."/>
            <person name="Jones T."/>
            <person name="Kawai J."/>
            <person name="Kamiya A."/>
            <person name="Meyers C."/>
            <person name="Nakajima M."/>
            <person name="Narusaka M."/>
            <person name="Seki M."/>
            <person name="Sakurai T."/>
            <person name="Satou M."/>
            <person name="Tamse R."/>
            <person name="Vaysberg M."/>
            <person name="Wallender E.K."/>
            <person name="Wong C."/>
            <person name="Yamamura Y."/>
            <person name="Yuan S."/>
            <person name="Shinozaki K."/>
            <person name="Davis R.W."/>
            <person name="Theologis A."/>
            <person name="Ecker J.R."/>
        </authorList>
    </citation>
    <scope>NUCLEOTIDE SEQUENCE [LARGE SCALE MRNA]</scope>
    <source>
        <strain>cv. Columbia</strain>
    </source>
</reference>
<reference key="5">
    <citation type="submission" date="2002-03" db="EMBL/GenBank/DDBJ databases">
        <title>Full-length cDNA from Arabidopsis thaliana.</title>
        <authorList>
            <person name="Brover V.V."/>
            <person name="Troukhan M.E."/>
            <person name="Alexandrov N.A."/>
            <person name="Lu Y.-P."/>
            <person name="Flavell R.B."/>
            <person name="Feldmann K.A."/>
        </authorList>
    </citation>
    <scope>NUCLEOTIDE SEQUENCE [LARGE SCALE MRNA]</scope>
</reference>
<reference key="6">
    <citation type="journal article" date="2005" name="Plant Physiol.">
        <title>Plantacyanin plays a role in reproduction in Arabidopsis.</title>
        <authorList>
            <person name="Dong J."/>
            <person name="Kim S.T."/>
            <person name="Lord E.M."/>
        </authorList>
    </citation>
    <scope>FUNCTION</scope>
    <scope>TISSUE SPECIFICITY</scope>
    <scope>DEVELOPMENTAL STAGE</scope>
    <scope>SUBCELLULAR LOCATION</scope>
    <scope>DISRUPTION PHENOTYPE</scope>
    <source>
        <strain>cv. Columbia</strain>
    </source>
</reference>
<reference key="7">
    <citation type="journal article" date="2008" name="J. Biol. Chem.">
        <title>MicroRNA-mediated systemic down-regulation of copper protein expression in response to low copper availability in Arabidopsis.</title>
        <authorList>
            <person name="Abdel-Ghany S.E."/>
            <person name="Pilon M."/>
        </authorList>
    </citation>
    <scope>INDUCTION BY COPPER</scope>
</reference>
<reference key="8">
    <citation type="journal article" date="2011" name="PLoS ONE">
        <title>AGO1 and AGO2 act redundantly in miR408-mediated Plantacyanin regulation.</title>
        <authorList>
            <person name="Maunoury N."/>
            <person name="Vaucheret H."/>
        </authorList>
    </citation>
    <scope>INDUCTION</scope>
    <source>
        <strain>cv. Columbia</strain>
    </source>
</reference>